<feature type="chain" id="PRO_1000063534" description="3-isopropylmalate dehydratase large subunit">
    <location>
        <begin position="1"/>
        <end position="469"/>
    </location>
</feature>
<feature type="binding site" evidence="1">
    <location>
        <position position="347"/>
    </location>
    <ligand>
        <name>[4Fe-4S] cluster</name>
        <dbReference type="ChEBI" id="CHEBI:49883"/>
    </ligand>
</feature>
<feature type="binding site" evidence="1">
    <location>
        <position position="410"/>
    </location>
    <ligand>
        <name>[4Fe-4S] cluster</name>
        <dbReference type="ChEBI" id="CHEBI:49883"/>
    </ligand>
</feature>
<feature type="binding site" evidence="1">
    <location>
        <position position="413"/>
    </location>
    <ligand>
        <name>[4Fe-4S] cluster</name>
        <dbReference type="ChEBI" id="CHEBI:49883"/>
    </ligand>
</feature>
<sequence length="469" mass="50740">MAQTLYDKLWNTHVVHTEEDGTTLLYIDRQLLHEVTSPQAFEGLKIAQRPVWRISANLAVSDHNVPTTDRSHGIADPVSKLQVDTLDSNCDAFGITQFKMNDVRQGIVHIIGPEQGATLPGMTIVCGDSHTSTHGAFGALAHGIGTSEVEHVLATQTLLQKKSKNMLVKVEGALPRGCTAKDIVLAIIGKIGTAGGTGYAIEFGGSTIRALTMEGRMTVCNMAIEAGARAGMVAVDDTTIDYLKGRPFVPTGAEWDQAVEYWRQFKSDDGAQFDRVVELNAAEIVPQVTWGTSPEMVTSIDGRVPDPEREKDPVKRDAMERALAYMALEPNTPIESIKVDKIFIGSCTNARIEDIRAAAYVVKKLNRRVASNVRLAMVVPGSGLVKAQAEREGLDKVFTDAGFEWREPGCSMCLAMNADRLEPGERCASTSNRNFEGRQGAGGRTHLVSPAMAAAAAIEGHFVDIRQLG</sequence>
<dbReference type="EC" id="4.2.1.33" evidence="1"/>
<dbReference type="EMBL" id="CP000459">
    <property type="protein sequence ID" value="ABK10686.1"/>
    <property type="molecule type" value="Genomic_DNA"/>
</dbReference>
<dbReference type="RefSeq" id="WP_006479340.1">
    <property type="nucleotide sequence ID" value="NC_008543.1"/>
</dbReference>
<dbReference type="SMR" id="A0AZ60"/>
<dbReference type="GeneID" id="83050355"/>
<dbReference type="KEGG" id="bch:Bcen2424_3949"/>
<dbReference type="HOGENOM" id="CLU_006714_3_4_4"/>
<dbReference type="UniPathway" id="UPA00048">
    <property type="reaction ID" value="UER00071"/>
</dbReference>
<dbReference type="GO" id="GO:0003861">
    <property type="term" value="F:3-isopropylmalate dehydratase activity"/>
    <property type="evidence" value="ECO:0007669"/>
    <property type="project" value="UniProtKB-UniRule"/>
</dbReference>
<dbReference type="GO" id="GO:0051539">
    <property type="term" value="F:4 iron, 4 sulfur cluster binding"/>
    <property type="evidence" value="ECO:0007669"/>
    <property type="project" value="UniProtKB-KW"/>
</dbReference>
<dbReference type="GO" id="GO:0046872">
    <property type="term" value="F:metal ion binding"/>
    <property type="evidence" value="ECO:0007669"/>
    <property type="project" value="UniProtKB-KW"/>
</dbReference>
<dbReference type="GO" id="GO:0009098">
    <property type="term" value="P:L-leucine biosynthetic process"/>
    <property type="evidence" value="ECO:0007669"/>
    <property type="project" value="UniProtKB-UniRule"/>
</dbReference>
<dbReference type="CDD" id="cd01583">
    <property type="entry name" value="IPMI"/>
    <property type="match status" value="1"/>
</dbReference>
<dbReference type="FunFam" id="3.30.499.10:FF:000007">
    <property type="entry name" value="3-isopropylmalate dehydratase large subunit"/>
    <property type="match status" value="1"/>
</dbReference>
<dbReference type="Gene3D" id="3.30.499.10">
    <property type="entry name" value="Aconitase, domain 3"/>
    <property type="match status" value="2"/>
</dbReference>
<dbReference type="HAMAP" id="MF_01026">
    <property type="entry name" value="LeuC_type1"/>
    <property type="match status" value="1"/>
</dbReference>
<dbReference type="InterPro" id="IPR004430">
    <property type="entry name" value="3-IsopropMal_deHydase_lsu"/>
</dbReference>
<dbReference type="InterPro" id="IPR015931">
    <property type="entry name" value="Acnase/IPM_dHydase_lsu_aba_1/3"/>
</dbReference>
<dbReference type="InterPro" id="IPR001030">
    <property type="entry name" value="Acoase/IPM_deHydtase_lsu_aba"/>
</dbReference>
<dbReference type="InterPro" id="IPR018136">
    <property type="entry name" value="Aconitase_4Fe-4S_BS"/>
</dbReference>
<dbReference type="InterPro" id="IPR036008">
    <property type="entry name" value="Aconitase_4Fe-4S_dom"/>
</dbReference>
<dbReference type="InterPro" id="IPR050067">
    <property type="entry name" value="IPM_dehydratase_rel_enz"/>
</dbReference>
<dbReference type="InterPro" id="IPR033941">
    <property type="entry name" value="IPMI_cat"/>
</dbReference>
<dbReference type="NCBIfam" id="TIGR00170">
    <property type="entry name" value="leuC"/>
    <property type="match status" value="1"/>
</dbReference>
<dbReference type="NCBIfam" id="NF004016">
    <property type="entry name" value="PRK05478.1"/>
    <property type="match status" value="1"/>
</dbReference>
<dbReference type="NCBIfam" id="NF009116">
    <property type="entry name" value="PRK12466.1"/>
    <property type="match status" value="1"/>
</dbReference>
<dbReference type="PANTHER" id="PTHR43822:SF9">
    <property type="entry name" value="3-ISOPROPYLMALATE DEHYDRATASE"/>
    <property type="match status" value="1"/>
</dbReference>
<dbReference type="PANTHER" id="PTHR43822">
    <property type="entry name" value="HOMOACONITASE, MITOCHONDRIAL-RELATED"/>
    <property type="match status" value="1"/>
</dbReference>
<dbReference type="Pfam" id="PF00330">
    <property type="entry name" value="Aconitase"/>
    <property type="match status" value="1"/>
</dbReference>
<dbReference type="PRINTS" id="PR00415">
    <property type="entry name" value="ACONITASE"/>
</dbReference>
<dbReference type="SUPFAM" id="SSF53732">
    <property type="entry name" value="Aconitase iron-sulfur domain"/>
    <property type="match status" value="1"/>
</dbReference>
<dbReference type="PROSITE" id="PS00450">
    <property type="entry name" value="ACONITASE_1"/>
    <property type="match status" value="1"/>
</dbReference>
<dbReference type="PROSITE" id="PS01244">
    <property type="entry name" value="ACONITASE_2"/>
    <property type="match status" value="1"/>
</dbReference>
<reference key="1">
    <citation type="submission" date="2006-08" db="EMBL/GenBank/DDBJ databases">
        <title>Complete sequence of chromosome 2 of Burkholderia cenocepacia HI2424.</title>
        <authorList>
            <person name="Copeland A."/>
            <person name="Lucas S."/>
            <person name="Lapidus A."/>
            <person name="Barry K."/>
            <person name="Detter J.C."/>
            <person name="Glavina del Rio T."/>
            <person name="Hammon N."/>
            <person name="Israni S."/>
            <person name="Pitluck S."/>
            <person name="Chain P."/>
            <person name="Malfatti S."/>
            <person name="Shin M."/>
            <person name="Vergez L."/>
            <person name="Schmutz J."/>
            <person name="Larimer F."/>
            <person name="Land M."/>
            <person name="Hauser L."/>
            <person name="Kyrpides N."/>
            <person name="Kim E."/>
            <person name="LiPuma J.J."/>
            <person name="Gonzalez C.F."/>
            <person name="Konstantinidis K."/>
            <person name="Tiedje J.M."/>
            <person name="Richardson P."/>
        </authorList>
    </citation>
    <scope>NUCLEOTIDE SEQUENCE [LARGE SCALE GENOMIC DNA]</scope>
    <source>
        <strain>HI2424</strain>
    </source>
</reference>
<evidence type="ECO:0000255" key="1">
    <source>
        <dbReference type="HAMAP-Rule" id="MF_01026"/>
    </source>
</evidence>
<protein>
    <recommendedName>
        <fullName evidence="1">3-isopropylmalate dehydratase large subunit</fullName>
        <ecNumber evidence="1">4.2.1.33</ecNumber>
    </recommendedName>
    <alternativeName>
        <fullName evidence="1">Alpha-IPM isomerase</fullName>
        <shortName evidence="1">IPMI</shortName>
    </alternativeName>
    <alternativeName>
        <fullName evidence="1">Isopropylmalate isomerase</fullName>
    </alternativeName>
</protein>
<keyword id="KW-0004">4Fe-4S</keyword>
<keyword id="KW-0028">Amino-acid biosynthesis</keyword>
<keyword id="KW-0100">Branched-chain amino acid biosynthesis</keyword>
<keyword id="KW-0408">Iron</keyword>
<keyword id="KW-0411">Iron-sulfur</keyword>
<keyword id="KW-0432">Leucine biosynthesis</keyword>
<keyword id="KW-0456">Lyase</keyword>
<keyword id="KW-0479">Metal-binding</keyword>
<name>LEUC_BURCH</name>
<proteinExistence type="inferred from homology"/>
<accession>A0AZ60</accession>
<gene>
    <name evidence="1" type="primary">leuC</name>
    <name type="ordered locus">Bcen2424_3949</name>
</gene>
<comment type="function">
    <text evidence="1">Catalyzes the isomerization between 2-isopropylmalate and 3-isopropylmalate, via the formation of 2-isopropylmaleate.</text>
</comment>
<comment type="catalytic activity">
    <reaction evidence="1">
        <text>(2R,3S)-3-isopropylmalate = (2S)-2-isopropylmalate</text>
        <dbReference type="Rhea" id="RHEA:32287"/>
        <dbReference type="ChEBI" id="CHEBI:1178"/>
        <dbReference type="ChEBI" id="CHEBI:35121"/>
        <dbReference type="EC" id="4.2.1.33"/>
    </reaction>
</comment>
<comment type="cofactor">
    <cofactor evidence="1">
        <name>[4Fe-4S] cluster</name>
        <dbReference type="ChEBI" id="CHEBI:49883"/>
    </cofactor>
    <text evidence="1">Binds 1 [4Fe-4S] cluster per subunit.</text>
</comment>
<comment type="pathway">
    <text evidence="1">Amino-acid biosynthesis; L-leucine biosynthesis; L-leucine from 3-methyl-2-oxobutanoate: step 2/4.</text>
</comment>
<comment type="subunit">
    <text evidence="1">Heterodimer of LeuC and LeuD.</text>
</comment>
<comment type="similarity">
    <text evidence="1">Belongs to the aconitase/IPM isomerase family. LeuC type 1 subfamily.</text>
</comment>
<organism>
    <name type="scientific">Burkholderia cenocepacia (strain HI2424)</name>
    <dbReference type="NCBI Taxonomy" id="331272"/>
    <lineage>
        <taxon>Bacteria</taxon>
        <taxon>Pseudomonadati</taxon>
        <taxon>Pseudomonadota</taxon>
        <taxon>Betaproteobacteria</taxon>
        <taxon>Burkholderiales</taxon>
        <taxon>Burkholderiaceae</taxon>
        <taxon>Burkholderia</taxon>
        <taxon>Burkholderia cepacia complex</taxon>
    </lineage>
</organism>